<reference key="1">
    <citation type="journal article" date="2001" name="Nature">
        <title>Genome sequence of Yersinia pestis, the causative agent of plague.</title>
        <authorList>
            <person name="Parkhill J."/>
            <person name="Wren B.W."/>
            <person name="Thomson N.R."/>
            <person name="Titball R.W."/>
            <person name="Holden M.T.G."/>
            <person name="Prentice M.B."/>
            <person name="Sebaihia M."/>
            <person name="James K.D."/>
            <person name="Churcher C.M."/>
            <person name="Mungall K.L."/>
            <person name="Baker S."/>
            <person name="Basham D."/>
            <person name="Bentley S.D."/>
            <person name="Brooks K."/>
            <person name="Cerdeno-Tarraga A.-M."/>
            <person name="Chillingworth T."/>
            <person name="Cronin A."/>
            <person name="Davies R.M."/>
            <person name="Davis P."/>
            <person name="Dougan G."/>
            <person name="Feltwell T."/>
            <person name="Hamlin N."/>
            <person name="Holroyd S."/>
            <person name="Jagels K."/>
            <person name="Karlyshev A.V."/>
            <person name="Leather S."/>
            <person name="Moule S."/>
            <person name="Oyston P.C.F."/>
            <person name="Quail M.A."/>
            <person name="Rutherford K.M."/>
            <person name="Simmonds M."/>
            <person name="Skelton J."/>
            <person name="Stevens K."/>
            <person name="Whitehead S."/>
            <person name="Barrell B.G."/>
        </authorList>
    </citation>
    <scope>NUCLEOTIDE SEQUENCE [LARGE SCALE GENOMIC DNA]</scope>
    <source>
        <strain>CO-92 / Biovar Orientalis</strain>
    </source>
</reference>
<reference key="2">
    <citation type="journal article" date="2002" name="J. Bacteriol.">
        <title>Genome sequence of Yersinia pestis KIM.</title>
        <authorList>
            <person name="Deng W."/>
            <person name="Burland V."/>
            <person name="Plunkett G. III"/>
            <person name="Boutin A."/>
            <person name="Mayhew G.F."/>
            <person name="Liss P."/>
            <person name="Perna N.T."/>
            <person name="Rose D.J."/>
            <person name="Mau B."/>
            <person name="Zhou S."/>
            <person name="Schwartz D.C."/>
            <person name="Fetherston J.D."/>
            <person name="Lindler L.E."/>
            <person name="Brubaker R.R."/>
            <person name="Plano G.V."/>
            <person name="Straley S.C."/>
            <person name="McDonough K.A."/>
            <person name="Nilles M.L."/>
            <person name="Matson J.S."/>
            <person name="Blattner F.R."/>
            <person name="Perry R.D."/>
        </authorList>
    </citation>
    <scope>NUCLEOTIDE SEQUENCE [LARGE SCALE GENOMIC DNA]</scope>
    <source>
        <strain>KIM10+ / Biovar Mediaevalis</strain>
    </source>
</reference>
<reference key="3">
    <citation type="journal article" date="2004" name="DNA Res.">
        <title>Complete genome sequence of Yersinia pestis strain 91001, an isolate avirulent to humans.</title>
        <authorList>
            <person name="Song Y."/>
            <person name="Tong Z."/>
            <person name="Wang J."/>
            <person name="Wang L."/>
            <person name="Guo Z."/>
            <person name="Han Y."/>
            <person name="Zhang J."/>
            <person name="Pei D."/>
            <person name="Zhou D."/>
            <person name="Qin H."/>
            <person name="Pang X."/>
            <person name="Han Y."/>
            <person name="Zhai J."/>
            <person name="Li M."/>
            <person name="Cui B."/>
            <person name="Qi Z."/>
            <person name="Jin L."/>
            <person name="Dai R."/>
            <person name="Chen F."/>
            <person name="Li S."/>
            <person name="Ye C."/>
            <person name="Du Z."/>
            <person name="Lin W."/>
            <person name="Wang J."/>
            <person name="Yu J."/>
            <person name="Yang H."/>
            <person name="Wang J."/>
            <person name="Huang P."/>
            <person name="Yang R."/>
        </authorList>
    </citation>
    <scope>NUCLEOTIDE SEQUENCE [LARGE SCALE GENOMIC DNA]</scope>
    <source>
        <strain>91001 / Biovar Mediaevalis</strain>
    </source>
</reference>
<organism>
    <name type="scientific">Yersinia pestis</name>
    <dbReference type="NCBI Taxonomy" id="632"/>
    <lineage>
        <taxon>Bacteria</taxon>
        <taxon>Pseudomonadati</taxon>
        <taxon>Pseudomonadota</taxon>
        <taxon>Gammaproteobacteria</taxon>
        <taxon>Enterobacterales</taxon>
        <taxon>Yersiniaceae</taxon>
        <taxon>Yersinia</taxon>
    </lineage>
</organism>
<dbReference type="EC" id="1.2.1.72" evidence="1"/>
<dbReference type="EMBL" id="AL590842">
    <property type="protein sequence ID" value="CAL19589.1"/>
    <property type="molecule type" value="Genomic_DNA"/>
</dbReference>
<dbReference type="EMBL" id="AE009952">
    <property type="protein sequence ID" value="AAM86859.1"/>
    <property type="molecule type" value="Genomic_DNA"/>
</dbReference>
<dbReference type="EMBL" id="AE017042">
    <property type="protein sequence ID" value="AAS63672.1"/>
    <property type="molecule type" value="Genomic_DNA"/>
</dbReference>
<dbReference type="PIR" id="AC0113">
    <property type="entry name" value="AC0113"/>
</dbReference>
<dbReference type="RefSeq" id="WP_002209964.1">
    <property type="nucleotide sequence ID" value="NZ_WUCM01000038.1"/>
</dbReference>
<dbReference type="RefSeq" id="YP_002345970.1">
    <property type="nucleotide sequence ID" value="NC_003143.1"/>
</dbReference>
<dbReference type="SMR" id="Q7CGS4"/>
<dbReference type="IntAct" id="Q7CGS4">
    <property type="interactions" value="4"/>
</dbReference>
<dbReference type="STRING" id="214092.YPO0922"/>
<dbReference type="PaxDb" id="214092-YPO0922"/>
<dbReference type="DNASU" id="1148256"/>
<dbReference type="EnsemblBacteria" id="AAS63672">
    <property type="protein sequence ID" value="AAS63672"/>
    <property type="gene ID" value="YP_3518"/>
</dbReference>
<dbReference type="GeneID" id="57973718"/>
<dbReference type="KEGG" id="ype:YPO0922"/>
<dbReference type="KEGG" id="ypk:y3309"/>
<dbReference type="KEGG" id="ypm:YP_3518"/>
<dbReference type="PATRIC" id="fig|214092.21.peg.1198"/>
<dbReference type="eggNOG" id="COG0057">
    <property type="taxonomic scope" value="Bacteria"/>
</dbReference>
<dbReference type="HOGENOM" id="CLU_030140_0_0_6"/>
<dbReference type="OMA" id="ENMVKIM"/>
<dbReference type="OrthoDB" id="9803304at2"/>
<dbReference type="UniPathway" id="UPA00244">
    <property type="reaction ID" value="UER00309"/>
</dbReference>
<dbReference type="Proteomes" id="UP000000815">
    <property type="component" value="Chromosome"/>
</dbReference>
<dbReference type="Proteomes" id="UP000001019">
    <property type="component" value="Chromosome"/>
</dbReference>
<dbReference type="Proteomes" id="UP000002490">
    <property type="component" value="Chromosome"/>
</dbReference>
<dbReference type="GO" id="GO:0005829">
    <property type="term" value="C:cytosol"/>
    <property type="evidence" value="ECO:0000318"/>
    <property type="project" value="GO_Central"/>
</dbReference>
<dbReference type="GO" id="GO:0048001">
    <property type="term" value="F:erythrose-4-phosphate dehydrogenase activity"/>
    <property type="evidence" value="ECO:0007669"/>
    <property type="project" value="UniProtKB-UniRule"/>
</dbReference>
<dbReference type="GO" id="GO:0004365">
    <property type="term" value="F:glyceraldehyde-3-phosphate dehydrogenase (NAD+) (phosphorylating) activity"/>
    <property type="evidence" value="ECO:0000318"/>
    <property type="project" value="GO_Central"/>
</dbReference>
<dbReference type="GO" id="GO:0051287">
    <property type="term" value="F:NAD binding"/>
    <property type="evidence" value="ECO:0000318"/>
    <property type="project" value="GO_Central"/>
</dbReference>
<dbReference type="GO" id="GO:0006006">
    <property type="term" value="P:glucose metabolic process"/>
    <property type="evidence" value="ECO:0000318"/>
    <property type="project" value="GO_Central"/>
</dbReference>
<dbReference type="GO" id="GO:0042823">
    <property type="term" value="P:pyridoxal phosphate biosynthetic process"/>
    <property type="evidence" value="ECO:0007669"/>
    <property type="project" value="UniProtKB-UniRule"/>
</dbReference>
<dbReference type="GO" id="GO:0008615">
    <property type="term" value="P:pyridoxine biosynthetic process"/>
    <property type="evidence" value="ECO:0007669"/>
    <property type="project" value="UniProtKB-UniRule"/>
</dbReference>
<dbReference type="CDD" id="cd23937">
    <property type="entry name" value="GAPDH_C_E4PDH"/>
    <property type="match status" value="1"/>
</dbReference>
<dbReference type="CDD" id="cd17892">
    <property type="entry name" value="GAPDH_N_E4PDH"/>
    <property type="match status" value="1"/>
</dbReference>
<dbReference type="FunFam" id="3.30.360.10:FF:000007">
    <property type="entry name" value="D-erythrose-4-phosphate dehydrogenase"/>
    <property type="match status" value="1"/>
</dbReference>
<dbReference type="FunFam" id="3.40.50.720:FF:000001">
    <property type="entry name" value="Glyceraldehyde-3-phosphate dehydrogenase"/>
    <property type="match status" value="1"/>
</dbReference>
<dbReference type="Gene3D" id="3.30.360.10">
    <property type="entry name" value="Dihydrodipicolinate Reductase, domain 2"/>
    <property type="match status" value="1"/>
</dbReference>
<dbReference type="Gene3D" id="3.40.50.720">
    <property type="entry name" value="NAD(P)-binding Rossmann-like Domain"/>
    <property type="match status" value="1"/>
</dbReference>
<dbReference type="HAMAP" id="MF_01640">
    <property type="entry name" value="E4P_dehydrog"/>
    <property type="match status" value="1"/>
</dbReference>
<dbReference type="InterPro" id="IPR006422">
    <property type="entry name" value="E4P_DH_bac"/>
</dbReference>
<dbReference type="InterPro" id="IPR020831">
    <property type="entry name" value="GlycerAld/Erythrose_P_DH"/>
</dbReference>
<dbReference type="InterPro" id="IPR020830">
    <property type="entry name" value="GlycerAld_3-P_DH_AS"/>
</dbReference>
<dbReference type="InterPro" id="IPR020829">
    <property type="entry name" value="GlycerAld_3-P_DH_cat"/>
</dbReference>
<dbReference type="InterPro" id="IPR020828">
    <property type="entry name" value="GlycerAld_3-P_DH_NAD(P)-bd"/>
</dbReference>
<dbReference type="InterPro" id="IPR036291">
    <property type="entry name" value="NAD(P)-bd_dom_sf"/>
</dbReference>
<dbReference type="NCBIfam" id="TIGR01532">
    <property type="entry name" value="E4PD_g-proteo"/>
    <property type="match status" value="1"/>
</dbReference>
<dbReference type="NCBIfam" id="NF010058">
    <property type="entry name" value="PRK13535.1"/>
    <property type="match status" value="1"/>
</dbReference>
<dbReference type="PANTHER" id="PTHR43148">
    <property type="entry name" value="GLYCERALDEHYDE-3-PHOSPHATE DEHYDROGENASE 2"/>
    <property type="match status" value="1"/>
</dbReference>
<dbReference type="Pfam" id="PF02800">
    <property type="entry name" value="Gp_dh_C"/>
    <property type="match status" value="1"/>
</dbReference>
<dbReference type="Pfam" id="PF00044">
    <property type="entry name" value="Gp_dh_N"/>
    <property type="match status" value="1"/>
</dbReference>
<dbReference type="PIRSF" id="PIRSF000149">
    <property type="entry name" value="GAP_DH"/>
    <property type="match status" value="1"/>
</dbReference>
<dbReference type="PRINTS" id="PR00078">
    <property type="entry name" value="G3PDHDRGNASE"/>
</dbReference>
<dbReference type="SMART" id="SM00846">
    <property type="entry name" value="Gp_dh_N"/>
    <property type="match status" value="1"/>
</dbReference>
<dbReference type="SUPFAM" id="SSF55347">
    <property type="entry name" value="Glyceraldehyde-3-phosphate dehydrogenase-like, C-terminal domain"/>
    <property type="match status" value="1"/>
</dbReference>
<dbReference type="SUPFAM" id="SSF51735">
    <property type="entry name" value="NAD(P)-binding Rossmann-fold domains"/>
    <property type="match status" value="1"/>
</dbReference>
<dbReference type="PROSITE" id="PS00071">
    <property type="entry name" value="GAPDH"/>
    <property type="match status" value="1"/>
</dbReference>
<protein>
    <recommendedName>
        <fullName evidence="1">D-erythrose-4-phosphate dehydrogenase</fullName>
        <shortName evidence="1">E4PDH</shortName>
        <ecNumber evidence="1">1.2.1.72</ecNumber>
    </recommendedName>
</protein>
<feature type="chain" id="PRO_0000293180" description="D-erythrose-4-phosphate dehydrogenase">
    <location>
        <begin position="1"/>
        <end position="338"/>
    </location>
</feature>
<feature type="active site" description="Nucleophile" evidence="1">
    <location>
        <position position="155"/>
    </location>
</feature>
<feature type="binding site" evidence="1">
    <location>
        <begin position="12"/>
        <end position="13"/>
    </location>
    <ligand>
        <name>NAD(+)</name>
        <dbReference type="ChEBI" id="CHEBI:57540"/>
    </ligand>
</feature>
<feature type="binding site" evidence="1">
    <location>
        <begin position="154"/>
        <end position="156"/>
    </location>
    <ligand>
        <name>substrate</name>
    </ligand>
</feature>
<feature type="binding site" evidence="1">
    <location>
        <position position="200"/>
    </location>
    <ligand>
        <name>substrate</name>
    </ligand>
</feature>
<feature type="binding site" evidence="1">
    <location>
        <begin position="213"/>
        <end position="214"/>
    </location>
    <ligand>
        <name>substrate</name>
    </ligand>
</feature>
<feature type="binding site" evidence="1">
    <location>
        <position position="236"/>
    </location>
    <ligand>
        <name>substrate</name>
    </ligand>
</feature>
<feature type="binding site" evidence="1">
    <location>
        <position position="318"/>
    </location>
    <ligand>
        <name>NAD(+)</name>
        <dbReference type="ChEBI" id="CHEBI:57540"/>
    </ligand>
</feature>
<feature type="site" description="Activates thiol group during catalysis" evidence="1">
    <location>
        <position position="182"/>
    </location>
</feature>
<keyword id="KW-0963">Cytoplasm</keyword>
<keyword id="KW-0520">NAD</keyword>
<keyword id="KW-0560">Oxidoreductase</keyword>
<keyword id="KW-0664">Pyridoxine biosynthesis</keyword>
<keyword id="KW-1185">Reference proteome</keyword>
<name>E4PD_YERPE</name>
<gene>
    <name evidence="1" type="primary">epd</name>
    <name type="ordered locus">YPO0922</name>
    <name type="ordered locus">y3309</name>
    <name type="ordered locus">YP_3518</name>
</gene>
<evidence type="ECO:0000255" key="1">
    <source>
        <dbReference type="HAMAP-Rule" id="MF_01640"/>
    </source>
</evidence>
<sequence length="338" mass="37015">MAIRIAINGFGRIGRSVLRALYESGRRAEISVVAINELASAEGMAHLLKYDSSHGRFAWDVRQECDSLYVGDDIIRLIHQSEIEQLPWSELGIDVVLDCSGVYGSREDGEAHVASGAKKVLFAHPGGHDLDATVVYGVNHQDLRAEHRIVSNASCTTNCIIPIIQLLDIAYGIESGTVTTIHSSMNDQPVIDAYHQDLRRTRAASQSIIPVDTKLAAGITRIFPKFCDRFEAISVRVPTINVTAIDLSVSVTHPVGVAEVNQLLQKAARGAFRGIVDYTELPLVSMDFNHDPHSAIVDGTQTRVSGQHLIKTLVWCDNEWGFANRMLDTTLAMAKSGF</sequence>
<comment type="function">
    <text evidence="1">Catalyzes the NAD-dependent conversion of D-erythrose 4-phosphate to 4-phosphoerythronate.</text>
</comment>
<comment type="catalytic activity">
    <reaction evidence="1">
        <text>D-erythrose 4-phosphate + NAD(+) + H2O = 4-phospho-D-erythronate + NADH + 2 H(+)</text>
        <dbReference type="Rhea" id="RHEA:12056"/>
        <dbReference type="ChEBI" id="CHEBI:15377"/>
        <dbReference type="ChEBI" id="CHEBI:15378"/>
        <dbReference type="ChEBI" id="CHEBI:16897"/>
        <dbReference type="ChEBI" id="CHEBI:57540"/>
        <dbReference type="ChEBI" id="CHEBI:57945"/>
        <dbReference type="ChEBI" id="CHEBI:58766"/>
        <dbReference type="EC" id="1.2.1.72"/>
    </reaction>
</comment>
<comment type="pathway">
    <text evidence="1">Cofactor biosynthesis; pyridoxine 5'-phosphate biosynthesis; pyridoxine 5'-phosphate from D-erythrose 4-phosphate: step 1/5.</text>
</comment>
<comment type="subunit">
    <text evidence="1">Homotetramer.</text>
</comment>
<comment type="subcellular location">
    <subcellularLocation>
        <location evidence="1">Cytoplasm</location>
    </subcellularLocation>
</comment>
<comment type="similarity">
    <text evidence="1">Belongs to the glyceraldehyde-3-phosphate dehydrogenase family. Epd subfamily.</text>
</comment>
<proteinExistence type="inferred from homology"/>
<accession>Q7CGS4</accession>
<accession>Q74QG3</accession>